<dbReference type="EMBL" id="AM286280">
    <property type="protein sequence ID" value="CAL08788.1"/>
    <property type="molecule type" value="Genomic_DNA"/>
</dbReference>
<dbReference type="RefSeq" id="WP_003020642.1">
    <property type="nucleotide sequence ID" value="NC_008245.1"/>
</dbReference>
<dbReference type="SMR" id="Q14I64"/>
<dbReference type="KEGG" id="ftf:FTF0772"/>
<dbReference type="HOGENOM" id="CLU_061463_3_2_6"/>
<dbReference type="GO" id="GO:0005737">
    <property type="term" value="C:cytoplasm"/>
    <property type="evidence" value="ECO:0007669"/>
    <property type="project" value="UniProtKB-ARBA"/>
</dbReference>
<dbReference type="GO" id="GO:1990904">
    <property type="term" value="C:ribonucleoprotein complex"/>
    <property type="evidence" value="ECO:0007669"/>
    <property type="project" value="UniProtKB-KW"/>
</dbReference>
<dbReference type="GO" id="GO:0005840">
    <property type="term" value="C:ribosome"/>
    <property type="evidence" value="ECO:0007669"/>
    <property type="project" value="UniProtKB-KW"/>
</dbReference>
<dbReference type="GO" id="GO:0019843">
    <property type="term" value="F:rRNA binding"/>
    <property type="evidence" value="ECO:0007669"/>
    <property type="project" value="UniProtKB-UniRule"/>
</dbReference>
<dbReference type="GO" id="GO:0003735">
    <property type="term" value="F:structural constituent of ribosome"/>
    <property type="evidence" value="ECO:0007669"/>
    <property type="project" value="InterPro"/>
</dbReference>
<dbReference type="GO" id="GO:0006412">
    <property type="term" value="P:translation"/>
    <property type="evidence" value="ECO:0007669"/>
    <property type="project" value="UniProtKB-UniRule"/>
</dbReference>
<dbReference type="HAMAP" id="MF_01363">
    <property type="entry name" value="Ribosomal_bL21"/>
    <property type="match status" value="1"/>
</dbReference>
<dbReference type="InterPro" id="IPR028909">
    <property type="entry name" value="bL21-like"/>
</dbReference>
<dbReference type="InterPro" id="IPR036164">
    <property type="entry name" value="bL21-like_sf"/>
</dbReference>
<dbReference type="InterPro" id="IPR001787">
    <property type="entry name" value="Ribosomal_bL21"/>
</dbReference>
<dbReference type="InterPro" id="IPR018258">
    <property type="entry name" value="Ribosomal_bL21_CS"/>
</dbReference>
<dbReference type="NCBIfam" id="TIGR00061">
    <property type="entry name" value="L21"/>
    <property type="match status" value="1"/>
</dbReference>
<dbReference type="PANTHER" id="PTHR21349">
    <property type="entry name" value="50S RIBOSOMAL PROTEIN L21"/>
    <property type="match status" value="1"/>
</dbReference>
<dbReference type="PANTHER" id="PTHR21349:SF0">
    <property type="entry name" value="LARGE RIBOSOMAL SUBUNIT PROTEIN BL21M"/>
    <property type="match status" value="1"/>
</dbReference>
<dbReference type="Pfam" id="PF00829">
    <property type="entry name" value="Ribosomal_L21p"/>
    <property type="match status" value="1"/>
</dbReference>
<dbReference type="SUPFAM" id="SSF141091">
    <property type="entry name" value="L21p-like"/>
    <property type="match status" value="1"/>
</dbReference>
<dbReference type="PROSITE" id="PS01169">
    <property type="entry name" value="RIBOSOMAL_L21"/>
    <property type="match status" value="1"/>
</dbReference>
<name>RL21_FRAT1</name>
<keyword id="KW-0687">Ribonucleoprotein</keyword>
<keyword id="KW-0689">Ribosomal protein</keyword>
<keyword id="KW-0694">RNA-binding</keyword>
<keyword id="KW-0699">rRNA-binding</keyword>
<sequence>MYAIIKNGGKQYKVKEDEVVKLEKFDLGIGEKVEFDTVLMGQTAAGEVKIGAPTVAGAKVVGEVVEQGRHKKVKIMKFRRRKHSMKQQGHRQYFTAVKVSSISL</sequence>
<reference key="1">
    <citation type="journal article" date="2007" name="PLoS ONE">
        <title>Genome sequencing shows that European isolates of Francisella tularensis subspecies tularensis are almost identical to US laboratory strain Schu S4.</title>
        <authorList>
            <person name="Chaudhuri R.R."/>
            <person name="Ren C.-P."/>
            <person name="Desmond L."/>
            <person name="Vincent G.A."/>
            <person name="Silman N.J."/>
            <person name="Brehm J.K."/>
            <person name="Elmore M.J."/>
            <person name="Hudson M.J."/>
            <person name="Forsman M."/>
            <person name="Isherwood K.E."/>
            <person name="Gurycova D."/>
            <person name="Minton N.P."/>
            <person name="Titball R.W."/>
            <person name="Pallen M.J."/>
            <person name="Vipond R."/>
        </authorList>
    </citation>
    <scope>NUCLEOTIDE SEQUENCE [LARGE SCALE GENOMIC DNA]</scope>
    <source>
        <strain>FSC 198</strain>
    </source>
</reference>
<organism>
    <name type="scientific">Francisella tularensis subsp. tularensis (strain FSC 198)</name>
    <dbReference type="NCBI Taxonomy" id="393115"/>
    <lineage>
        <taxon>Bacteria</taxon>
        <taxon>Pseudomonadati</taxon>
        <taxon>Pseudomonadota</taxon>
        <taxon>Gammaproteobacteria</taxon>
        <taxon>Thiotrichales</taxon>
        <taxon>Francisellaceae</taxon>
        <taxon>Francisella</taxon>
    </lineage>
</organism>
<proteinExistence type="inferred from homology"/>
<evidence type="ECO:0000255" key="1">
    <source>
        <dbReference type="HAMAP-Rule" id="MF_01363"/>
    </source>
</evidence>
<evidence type="ECO:0000305" key="2"/>
<feature type="chain" id="PRO_0000270669" description="Large ribosomal subunit protein bL21">
    <location>
        <begin position="1"/>
        <end position="104"/>
    </location>
</feature>
<protein>
    <recommendedName>
        <fullName evidence="1">Large ribosomal subunit protein bL21</fullName>
    </recommendedName>
    <alternativeName>
        <fullName evidence="2">50S ribosomal protein L21</fullName>
    </alternativeName>
</protein>
<gene>
    <name evidence="1" type="primary">rplU</name>
    <name type="ordered locus">FTF0772</name>
</gene>
<comment type="function">
    <text evidence="1">This protein binds to 23S rRNA in the presence of protein L20.</text>
</comment>
<comment type="subunit">
    <text evidence="1">Part of the 50S ribosomal subunit. Contacts protein L20.</text>
</comment>
<comment type="similarity">
    <text evidence="1">Belongs to the bacterial ribosomal protein bL21 family.</text>
</comment>
<accession>Q14I64</accession>